<organism>
    <name type="scientific">African swine fever virus (strain Badajoz 1971 Vero-adapted)</name>
    <name type="common">Ba71V</name>
    <name type="synonym">ASFV</name>
    <dbReference type="NCBI Taxonomy" id="10498"/>
    <lineage>
        <taxon>Viruses</taxon>
        <taxon>Varidnaviria</taxon>
        <taxon>Bamfordvirae</taxon>
        <taxon>Nucleocytoviricota</taxon>
        <taxon>Pokkesviricetes</taxon>
        <taxon>Asfuvirales</taxon>
        <taxon>Asfarviridae</taxon>
        <taxon>Asfivirus</taxon>
        <taxon>African swine fever virus</taxon>
    </lineage>
</organism>
<organismHost>
    <name type="scientific">Ornithodoros</name>
    <name type="common">relapsing fever ticks</name>
    <dbReference type="NCBI Taxonomy" id="6937"/>
</organismHost>
<organismHost>
    <name type="scientific">Sus scrofa</name>
    <name type="common">Pig</name>
    <dbReference type="NCBI Taxonomy" id="9823"/>
</organismHost>
<evidence type="ECO:0000250" key="1"/>
<evidence type="ECO:0000269" key="2">
    <source>
    </source>
</evidence>
<evidence type="ECO:0000269" key="3">
    <source>
    </source>
</evidence>
<evidence type="ECO:0000269" key="4">
    <source>
    </source>
</evidence>
<evidence type="ECO:0000305" key="5"/>
<protein>
    <recommendedName>
        <fullName>Protein MGF 360-2L</fullName>
    </recommendedName>
</protein>
<accession>P23166</accession>
<dbReference type="EMBL" id="M57546">
    <property type="protein sequence ID" value="AAA42682.1"/>
    <property type="molecule type" value="Genomic_DNA"/>
</dbReference>
<dbReference type="EMBL" id="U18466">
    <property type="protein sequence ID" value="AAA65239.1"/>
    <property type="molecule type" value="Genomic_DNA"/>
</dbReference>
<dbReference type="PIR" id="B43680">
    <property type="entry name" value="B43680"/>
</dbReference>
<dbReference type="RefSeq" id="NP_042703.1">
    <property type="nucleotide sequence ID" value="NC_001659.2"/>
</dbReference>
<dbReference type="SMR" id="P23166"/>
<dbReference type="GeneID" id="22220393"/>
<dbReference type="KEGG" id="vg:22220393"/>
<dbReference type="Proteomes" id="UP000000624">
    <property type="component" value="Segment"/>
</dbReference>
<dbReference type="GO" id="GO:0042330">
    <property type="term" value="P:taxis"/>
    <property type="evidence" value="ECO:0007669"/>
    <property type="project" value="InterPro"/>
</dbReference>
<dbReference type="InterPro" id="IPR002595">
    <property type="entry name" value="ASFV_MGF360"/>
</dbReference>
<dbReference type="Pfam" id="PF01671">
    <property type="entry name" value="ASFV_360"/>
    <property type="match status" value="1"/>
</dbReference>
<reference key="1">
    <citation type="journal article" date="1990" name="J. Virol.">
        <title>Multigene families in African swine fever virus: family 360.</title>
        <authorList>
            <person name="Gonzalez A."/>
            <person name="Calvo V."/>
            <person name="Almazan F."/>
            <person name="Almendral J.M."/>
            <person name="Ramirez J.C."/>
            <person name="de la Vega I."/>
            <person name="Blasco R."/>
            <person name="Vinuela E."/>
        </authorList>
    </citation>
    <scope>NUCLEOTIDE SEQUENCE [GENOMIC DNA]</scope>
</reference>
<reference key="2">
    <citation type="journal article" date="1995" name="Virology">
        <title>Analysis of the complete nucleotide sequence of African swine fever virus.</title>
        <authorList>
            <person name="Yanez R.J."/>
            <person name="Rodriguez J.M."/>
            <person name="Nogal M.L."/>
            <person name="Yuste L."/>
            <person name="Enriquez C."/>
            <person name="Rodriguez J.F."/>
            <person name="Vinuela E."/>
        </authorList>
    </citation>
    <scope>NUCLEOTIDE SEQUENCE [LARGE SCALE GENOMIC DNA]</scope>
</reference>
<reference key="3">
    <citation type="journal article" date="2001" name="J. Virol.">
        <title>African swine fever virus multigene family 360 and 530 genes are novel macrophage host range determinants.</title>
        <authorList>
            <person name="Zsak L."/>
            <person name="Lu Z."/>
            <person name="Burrage T.G."/>
            <person name="Neilan J.G."/>
            <person name="Kutish G.F."/>
            <person name="Moore D.M."/>
            <person name="Rock D.L."/>
        </authorList>
    </citation>
    <scope>FUNCTION</scope>
</reference>
<reference key="4">
    <citation type="journal article" date="2004" name="J. Virol.">
        <title>African swine fever virus multigene family 360 and 530 genes affect host interferon response.</title>
        <authorList>
            <person name="Afonso C.L."/>
            <person name="Piccone M.E."/>
            <person name="Zaffuto K.M."/>
            <person name="Neilan J."/>
            <person name="Kutish G.F."/>
            <person name="Lu Z."/>
            <person name="Balinsky C.A."/>
            <person name="Gibb T.R."/>
            <person name="Bean T.J."/>
            <person name="Zsak L."/>
            <person name="Rock D.L."/>
        </authorList>
    </citation>
    <scope>FUNCTION</scope>
</reference>
<reference key="5">
    <citation type="journal article" date="2004" name="J. Virol.">
        <title>African swine fever virus multigene family 360 genes affect virus replication and generalization of infection in Ornithodoros porcinus ticks.</title>
        <authorList>
            <person name="Burrage T.G."/>
            <person name="Lu Z."/>
            <person name="Neilan J.G."/>
            <person name="Rock D.L."/>
            <person name="Zsak L."/>
        </authorList>
    </citation>
    <scope>FUNCTION</scope>
</reference>
<name>3602L_ASFB7</name>
<gene>
    <name type="ordered locus">BA71V-004</name>
    <name type="ORF">KP362L</name>
</gene>
<comment type="function">
    <text evidence="1 2 3 4">Plays a role in virus cell tropism, and may be required for efficient virus replication in macrophages.</text>
</comment>
<comment type="similarity">
    <text evidence="5">Belongs to the asfivirus MGF 360 family.</text>
</comment>
<proteinExistence type="inferred from homology"/>
<sequence length="362" mass="42639">MSTPLSLQALAKKILATQHISKNHYFILKYCGLWWHGAPIMFSTNEDNQLMIKSAIFKDGLELNLALMKAVQENNYDLIELFTEWGADINSSLVTVNTEHTWNFCRELGAKILNEMDIVQIFYKIHRIKTSSNIILCHKLLSNNPLFQNIEELKIIICCFLEKISINFILNEITLNEMLARLWYSMAVRYHLTEAIQYFYQRYRHFKDWRLICGLSFNNVSDLHEIYHIKKVDMNIDEMMYLACMRDSNFLTIFYCFVLGANINRAMVTSVKNFYTNNLFFCIDLGANAFEESLELAKQKNHDILVEILSFKDFYNSNVSLLSLKTTDPEKINALLKNYRSKNIMRYKKLCPKIIRWARFII</sequence>
<feature type="chain" id="PRO_0000221950" description="Protein MGF 360-2L">
    <location>
        <begin position="1"/>
        <end position="362"/>
    </location>
</feature>
<keyword id="KW-1185">Reference proteome</keyword>